<dbReference type="EMBL" id="CU928179">
    <property type="protein sequence ID" value="CAR29672.1"/>
    <property type="molecule type" value="Genomic_DNA"/>
</dbReference>
<dbReference type="RefSeq" id="XP_002498605.1">
    <property type="nucleotide sequence ID" value="XM_002498560.1"/>
</dbReference>
<dbReference type="FunCoup" id="C5E0N8">
    <property type="interactions" value="49"/>
</dbReference>
<dbReference type="GeneID" id="8206427"/>
<dbReference type="KEGG" id="zro:ZYRO0G14322g"/>
<dbReference type="HOGENOM" id="CLU_035070_0_0_1"/>
<dbReference type="InParanoid" id="C5E0N8"/>
<dbReference type="Proteomes" id="UP000008536">
    <property type="component" value="Chromosome G"/>
</dbReference>
<dbReference type="GO" id="GO:0005739">
    <property type="term" value="C:mitochondrion"/>
    <property type="evidence" value="ECO:0007669"/>
    <property type="project" value="UniProtKB-SubCell"/>
</dbReference>
<dbReference type="GO" id="GO:0003723">
    <property type="term" value="F:RNA binding"/>
    <property type="evidence" value="ECO:0007669"/>
    <property type="project" value="UniProtKB-KW"/>
</dbReference>
<dbReference type="GO" id="GO:0006417">
    <property type="term" value="P:regulation of translation"/>
    <property type="evidence" value="ECO:0007669"/>
    <property type="project" value="UniProtKB-KW"/>
</dbReference>
<dbReference type="InterPro" id="IPR024319">
    <property type="entry name" value="ATPase_expression_mit"/>
</dbReference>
<dbReference type="Pfam" id="PF12921">
    <property type="entry name" value="ATP13"/>
    <property type="match status" value="1"/>
</dbReference>
<feature type="transit peptide" description="Mitochondrion" evidence="2">
    <location>
        <begin position="1"/>
        <end status="unknown"/>
    </location>
</feature>
<feature type="chain" id="PRO_0000405639" description="ATPase expression protein 2, mitochondrial">
    <location>
        <begin status="unknown"/>
        <end position="550"/>
    </location>
</feature>
<reference key="1">
    <citation type="journal article" date="2009" name="Genome Res.">
        <title>Comparative genomics of protoploid Saccharomycetaceae.</title>
        <authorList>
            <consortium name="The Genolevures Consortium"/>
            <person name="Souciet J.-L."/>
            <person name="Dujon B."/>
            <person name="Gaillardin C."/>
            <person name="Johnston M."/>
            <person name="Baret P.V."/>
            <person name="Cliften P."/>
            <person name="Sherman D.J."/>
            <person name="Weissenbach J."/>
            <person name="Westhof E."/>
            <person name="Wincker P."/>
            <person name="Jubin C."/>
            <person name="Poulain J."/>
            <person name="Barbe V."/>
            <person name="Segurens B."/>
            <person name="Artiguenave F."/>
            <person name="Anthouard V."/>
            <person name="Vacherie B."/>
            <person name="Val M.-E."/>
            <person name="Fulton R.S."/>
            <person name="Minx P."/>
            <person name="Wilson R."/>
            <person name="Durrens P."/>
            <person name="Jean G."/>
            <person name="Marck C."/>
            <person name="Martin T."/>
            <person name="Nikolski M."/>
            <person name="Rolland T."/>
            <person name="Seret M.-L."/>
            <person name="Casaregola S."/>
            <person name="Despons L."/>
            <person name="Fairhead C."/>
            <person name="Fischer G."/>
            <person name="Lafontaine I."/>
            <person name="Leh V."/>
            <person name="Lemaire M."/>
            <person name="de Montigny J."/>
            <person name="Neuveglise C."/>
            <person name="Thierry A."/>
            <person name="Blanc-Lenfle I."/>
            <person name="Bleykasten C."/>
            <person name="Diffels J."/>
            <person name="Fritsch E."/>
            <person name="Frangeul L."/>
            <person name="Goeffon A."/>
            <person name="Jauniaux N."/>
            <person name="Kachouri-Lafond R."/>
            <person name="Payen C."/>
            <person name="Potier S."/>
            <person name="Pribylova L."/>
            <person name="Ozanne C."/>
            <person name="Richard G.-F."/>
            <person name="Sacerdot C."/>
            <person name="Straub M.-L."/>
            <person name="Talla E."/>
        </authorList>
    </citation>
    <scope>NUCLEOTIDE SEQUENCE [LARGE SCALE GENOMIC DNA]</scope>
    <source>
        <strain>ATCC 2623 / CBS 732 / BCRC 21506 / NBRC 1130 / NCYC 568 / NRRL Y-229</strain>
    </source>
</reference>
<gene>
    <name type="primary">AEP2</name>
    <name type="ordered locus">ZYRO0G14322g</name>
</gene>
<proteinExistence type="inferred from homology"/>
<comment type="function">
    <text evidence="1">Required for translation of the mitochondrial OLI1 transcript coding for the mitochondrial ATP synthase subunit 9.</text>
</comment>
<comment type="subunit">
    <text evidence="1">Binds to the 5'UTR of the OLI1 mRNA.</text>
</comment>
<comment type="subcellular location">
    <subcellularLocation>
        <location evidence="1">Mitochondrion</location>
    </subcellularLocation>
</comment>
<comment type="similarity">
    <text evidence="3">Belongs to the AEP2 family.</text>
</comment>
<protein>
    <recommendedName>
        <fullName>ATPase expression protein 2, mitochondrial</fullName>
    </recommendedName>
</protein>
<organism>
    <name type="scientific">Zygosaccharomyces rouxii (strain ATCC 2623 / CBS 732 / NBRC 1130 / NCYC 568 / NRRL Y-229)</name>
    <dbReference type="NCBI Taxonomy" id="559307"/>
    <lineage>
        <taxon>Eukaryota</taxon>
        <taxon>Fungi</taxon>
        <taxon>Dikarya</taxon>
        <taxon>Ascomycota</taxon>
        <taxon>Saccharomycotina</taxon>
        <taxon>Saccharomycetes</taxon>
        <taxon>Saccharomycetales</taxon>
        <taxon>Saccharomycetaceae</taxon>
        <taxon>Zygosaccharomyces</taxon>
    </lineage>
</organism>
<sequence length="550" mass="63663">MLRTACSRSHVFKAFSSSLMLEHALAAANSSGAAAPTNAASTGNSHDSTLKSELPLRTLNDELHNAERKYIKPLTNAPEWSSTRTGPNSKIREYLKNGQYTKLLIRLSVDNHLNNEYISGLFTTGGLTKSEYSLFINKLLSEEELDVKLSNVIPDTPHTELIYKLYEFYCDHIVDQHNLTPLQLYDLNLFLKTFIAEAQLSKAHNVLDFILLRRPLNDLLANTDVEILIQFLRLKCGALSKFWKIQPASQRNSTAITLGEKASDCHLAKSYKFQNEKVLLQIINSVLGEHNWKNRRSPKLDAAIIYSLGYLGQTDLIEKYVNRTWSPSKDEGVKTNPNSDLLVAVLTSYCVKEGNMRKGLEVLDRFIRDYPEVELDPLFWRRLLQLSSLLWDKKRDRKATLSHGCWTIMKQWHAQRQRKIPYDYGIMKELYPIFVRTKNKNGALEVITKSFFGAFIQPEFTIRPNELSLLCKYQRFILKMIALKGNYHKGFEFCQEWSFSSTNKFELQSYFMKWRGIHEQRRTSQSKQKAALQEKYDEMEEDDMLLGRLW</sequence>
<evidence type="ECO:0000250" key="1"/>
<evidence type="ECO:0000255" key="2"/>
<evidence type="ECO:0000305" key="3"/>
<keyword id="KW-0496">Mitochondrion</keyword>
<keyword id="KW-1185">Reference proteome</keyword>
<keyword id="KW-0694">RNA-binding</keyword>
<keyword id="KW-0809">Transit peptide</keyword>
<keyword id="KW-0810">Translation regulation</keyword>
<name>AEP2_ZYGRC</name>
<accession>C5E0N8</accession>